<name>DNAA_SYNS3</name>
<protein>
    <recommendedName>
        <fullName evidence="1">Chromosomal replication initiator protein DnaA</fullName>
    </recommendedName>
</protein>
<gene>
    <name evidence="1" type="primary">dnaA</name>
    <name type="ordered locus">sync_1933</name>
</gene>
<comment type="function">
    <text evidence="1">Plays an essential role in the initiation and regulation of chromosomal replication. ATP-DnaA binds to the origin of replication (oriC) to initiate formation of the DNA replication initiation complex once per cell cycle. Binds the DnaA box (a 9 base pair repeat at the origin) and separates the double-stranded (ds)DNA. Forms a right-handed helical filament on oriC DNA; dsDNA binds to the exterior of the filament while single-stranded (ss)DNA is stabiized in the filament's interior. The ATP-DnaA-oriC complex binds and stabilizes one strand of the AT-rich DNA unwinding element (DUE), permitting loading of DNA polymerase. After initiation quickly degrades to an ADP-DnaA complex that is not apt for DNA replication. Binds acidic phospholipids.</text>
</comment>
<comment type="subunit">
    <text evidence="1">Oligomerizes as a right-handed, spiral filament on DNA at oriC.</text>
</comment>
<comment type="subcellular location">
    <subcellularLocation>
        <location evidence="1">Cytoplasm</location>
    </subcellularLocation>
</comment>
<comment type="domain">
    <text evidence="1">Domain I is involved in oligomerization and binding regulators, domain II is flexibile and of varying length in different bacteria, domain III forms the AAA+ region, while domain IV binds dsDNA.</text>
</comment>
<comment type="similarity">
    <text evidence="1">Belongs to the DnaA family.</text>
</comment>
<accession>Q0I8T6</accession>
<proteinExistence type="inferred from homology"/>
<dbReference type="EMBL" id="CP000435">
    <property type="protein sequence ID" value="ABI46141.1"/>
    <property type="molecule type" value="Genomic_DNA"/>
</dbReference>
<dbReference type="RefSeq" id="WP_011619849.1">
    <property type="nucleotide sequence ID" value="NC_008319.1"/>
</dbReference>
<dbReference type="SMR" id="Q0I8T6"/>
<dbReference type="STRING" id="64471.sync_1933"/>
<dbReference type="KEGG" id="syg:sync_1933"/>
<dbReference type="eggNOG" id="COG0593">
    <property type="taxonomic scope" value="Bacteria"/>
</dbReference>
<dbReference type="HOGENOM" id="CLU_026910_3_1_3"/>
<dbReference type="OrthoDB" id="9807019at2"/>
<dbReference type="Proteomes" id="UP000001961">
    <property type="component" value="Chromosome"/>
</dbReference>
<dbReference type="GO" id="GO:0005737">
    <property type="term" value="C:cytoplasm"/>
    <property type="evidence" value="ECO:0007669"/>
    <property type="project" value="UniProtKB-SubCell"/>
</dbReference>
<dbReference type="GO" id="GO:0005886">
    <property type="term" value="C:plasma membrane"/>
    <property type="evidence" value="ECO:0007669"/>
    <property type="project" value="TreeGrafter"/>
</dbReference>
<dbReference type="GO" id="GO:0005524">
    <property type="term" value="F:ATP binding"/>
    <property type="evidence" value="ECO:0007669"/>
    <property type="project" value="UniProtKB-UniRule"/>
</dbReference>
<dbReference type="GO" id="GO:0016887">
    <property type="term" value="F:ATP hydrolysis activity"/>
    <property type="evidence" value="ECO:0007669"/>
    <property type="project" value="InterPro"/>
</dbReference>
<dbReference type="GO" id="GO:0003688">
    <property type="term" value="F:DNA replication origin binding"/>
    <property type="evidence" value="ECO:0007669"/>
    <property type="project" value="UniProtKB-UniRule"/>
</dbReference>
<dbReference type="GO" id="GO:0008289">
    <property type="term" value="F:lipid binding"/>
    <property type="evidence" value="ECO:0007669"/>
    <property type="project" value="UniProtKB-KW"/>
</dbReference>
<dbReference type="GO" id="GO:0006270">
    <property type="term" value="P:DNA replication initiation"/>
    <property type="evidence" value="ECO:0007669"/>
    <property type="project" value="UniProtKB-UniRule"/>
</dbReference>
<dbReference type="GO" id="GO:0006275">
    <property type="term" value="P:regulation of DNA replication"/>
    <property type="evidence" value="ECO:0007669"/>
    <property type="project" value="UniProtKB-UniRule"/>
</dbReference>
<dbReference type="CDD" id="cd00009">
    <property type="entry name" value="AAA"/>
    <property type="match status" value="1"/>
</dbReference>
<dbReference type="CDD" id="cd06571">
    <property type="entry name" value="Bac_DnaA_C"/>
    <property type="match status" value="1"/>
</dbReference>
<dbReference type="FunFam" id="3.40.50.300:FF:000668">
    <property type="entry name" value="Chromosomal replication initiator protein DnaA"/>
    <property type="match status" value="1"/>
</dbReference>
<dbReference type="Gene3D" id="1.10.1750.10">
    <property type="match status" value="1"/>
</dbReference>
<dbReference type="Gene3D" id="1.10.8.60">
    <property type="match status" value="1"/>
</dbReference>
<dbReference type="Gene3D" id="3.30.300.180">
    <property type="match status" value="1"/>
</dbReference>
<dbReference type="Gene3D" id="3.40.50.300">
    <property type="entry name" value="P-loop containing nucleotide triphosphate hydrolases"/>
    <property type="match status" value="1"/>
</dbReference>
<dbReference type="HAMAP" id="MF_00377">
    <property type="entry name" value="DnaA_bact"/>
    <property type="match status" value="1"/>
</dbReference>
<dbReference type="InterPro" id="IPR003593">
    <property type="entry name" value="AAA+_ATPase"/>
</dbReference>
<dbReference type="InterPro" id="IPR001957">
    <property type="entry name" value="Chromosome_initiator_DnaA"/>
</dbReference>
<dbReference type="InterPro" id="IPR020591">
    <property type="entry name" value="Chromosome_initiator_DnaA-like"/>
</dbReference>
<dbReference type="InterPro" id="IPR018312">
    <property type="entry name" value="Chromosome_initiator_DnaA_CS"/>
</dbReference>
<dbReference type="InterPro" id="IPR013159">
    <property type="entry name" value="DnaA_C"/>
</dbReference>
<dbReference type="InterPro" id="IPR013317">
    <property type="entry name" value="DnaA_dom"/>
</dbReference>
<dbReference type="InterPro" id="IPR024633">
    <property type="entry name" value="DnaA_N_dom"/>
</dbReference>
<dbReference type="InterPro" id="IPR038454">
    <property type="entry name" value="DnaA_N_sf"/>
</dbReference>
<dbReference type="InterPro" id="IPR027417">
    <property type="entry name" value="P-loop_NTPase"/>
</dbReference>
<dbReference type="InterPro" id="IPR010921">
    <property type="entry name" value="Trp_repressor/repl_initiator"/>
</dbReference>
<dbReference type="NCBIfam" id="TIGR00362">
    <property type="entry name" value="DnaA"/>
    <property type="match status" value="1"/>
</dbReference>
<dbReference type="PANTHER" id="PTHR30050">
    <property type="entry name" value="CHROMOSOMAL REPLICATION INITIATOR PROTEIN DNAA"/>
    <property type="match status" value="1"/>
</dbReference>
<dbReference type="PANTHER" id="PTHR30050:SF2">
    <property type="entry name" value="CHROMOSOMAL REPLICATION INITIATOR PROTEIN DNAA"/>
    <property type="match status" value="1"/>
</dbReference>
<dbReference type="Pfam" id="PF00308">
    <property type="entry name" value="Bac_DnaA"/>
    <property type="match status" value="1"/>
</dbReference>
<dbReference type="Pfam" id="PF08299">
    <property type="entry name" value="Bac_DnaA_C"/>
    <property type="match status" value="1"/>
</dbReference>
<dbReference type="Pfam" id="PF11638">
    <property type="entry name" value="DnaA_N"/>
    <property type="match status" value="1"/>
</dbReference>
<dbReference type="PRINTS" id="PR00051">
    <property type="entry name" value="DNAA"/>
</dbReference>
<dbReference type="SMART" id="SM00382">
    <property type="entry name" value="AAA"/>
    <property type="match status" value="1"/>
</dbReference>
<dbReference type="SMART" id="SM00760">
    <property type="entry name" value="Bac_DnaA_C"/>
    <property type="match status" value="1"/>
</dbReference>
<dbReference type="SUPFAM" id="SSF52540">
    <property type="entry name" value="P-loop containing nucleoside triphosphate hydrolases"/>
    <property type="match status" value="1"/>
</dbReference>
<dbReference type="SUPFAM" id="SSF48295">
    <property type="entry name" value="TrpR-like"/>
    <property type="match status" value="1"/>
</dbReference>
<dbReference type="PROSITE" id="PS01008">
    <property type="entry name" value="DNAA"/>
    <property type="match status" value="1"/>
</dbReference>
<feature type="chain" id="PRO_1000048750" description="Chromosomal replication initiator protein DnaA">
    <location>
        <begin position="1"/>
        <end position="468"/>
    </location>
</feature>
<feature type="region of interest" description="Domain I, interacts with DnaA modulators" evidence="1">
    <location>
        <begin position="1"/>
        <end position="86"/>
    </location>
</feature>
<feature type="region of interest" description="Domain II" evidence="1">
    <location>
        <begin position="86"/>
        <end position="127"/>
    </location>
</feature>
<feature type="region of interest" description="Domain III, AAA+ region" evidence="1">
    <location>
        <begin position="128"/>
        <end position="344"/>
    </location>
</feature>
<feature type="region of interest" description="Domain IV, binds dsDNA" evidence="1">
    <location>
        <begin position="345"/>
        <end position="468"/>
    </location>
</feature>
<feature type="binding site" evidence="1">
    <location>
        <position position="172"/>
    </location>
    <ligand>
        <name>ATP</name>
        <dbReference type="ChEBI" id="CHEBI:30616"/>
    </ligand>
</feature>
<feature type="binding site" evidence="1">
    <location>
        <position position="174"/>
    </location>
    <ligand>
        <name>ATP</name>
        <dbReference type="ChEBI" id="CHEBI:30616"/>
    </ligand>
</feature>
<feature type="binding site" evidence="1">
    <location>
        <position position="175"/>
    </location>
    <ligand>
        <name>ATP</name>
        <dbReference type="ChEBI" id="CHEBI:30616"/>
    </ligand>
</feature>
<feature type="binding site" evidence="1">
    <location>
        <position position="176"/>
    </location>
    <ligand>
        <name>ATP</name>
        <dbReference type="ChEBI" id="CHEBI:30616"/>
    </ligand>
</feature>
<keyword id="KW-0067">ATP-binding</keyword>
<keyword id="KW-0963">Cytoplasm</keyword>
<keyword id="KW-0235">DNA replication</keyword>
<keyword id="KW-0238">DNA-binding</keyword>
<keyword id="KW-0446">Lipid-binding</keyword>
<keyword id="KW-0547">Nucleotide-binding</keyword>
<keyword id="KW-1185">Reference proteome</keyword>
<organism>
    <name type="scientific">Synechococcus sp. (strain CC9311)</name>
    <dbReference type="NCBI Taxonomy" id="64471"/>
    <lineage>
        <taxon>Bacteria</taxon>
        <taxon>Bacillati</taxon>
        <taxon>Cyanobacteriota</taxon>
        <taxon>Cyanophyceae</taxon>
        <taxon>Synechococcales</taxon>
        <taxon>Synechococcaceae</taxon>
        <taxon>Synechococcus</taxon>
    </lineage>
</organism>
<sequence length="468" mass="51984">MELTGSELWDKVQHALQSNLSKPTFETWIRPARCSSFQDRMLTLQAPNSFASNWLRKNYASTIAEVAQEIIGHPIEVIVLAQDDEDAESGSTPLSRVSTSNQPLASTAAEAAAAVSAPPSTAPRRLPGLNMRYVFNRFVVGPNSRMAHAAALAVAEAPGREFNPLFICGGVGLGKTHLMQAIGHYRLEIDPEARVFYVSTETFTNDLITAIRKDGMQAFRDRYRAADLILVDDIQFIEGKEYTQEEFFHTFNALHDAGRQIVIASDRPPSQIPRLQERLISRFSMGLIADIQAPDLETRMAILQKKAEQERVALPRDLIQYISGRFTSNIRELEGALTRAVAFSSITGIPMTVESVAPMLDPSGQGVDVTPQQVIEKVSEVFDVTADDMRSSSRRRAVSQARQVGMFLMRQGTDLSLPRIGDTFGGKDHTTVIYAIEQVEKKLATDPQLASQVQRVKDLLQIDSRRRR</sequence>
<evidence type="ECO:0000255" key="1">
    <source>
        <dbReference type="HAMAP-Rule" id="MF_00377"/>
    </source>
</evidence>
<reference key="1">
    <citation type="journal article" date="2006" name="Proc. Natl. Acad. Sci. U.S.A.">
        <title>Genome sequence of Synechococcus CC9311: insights into adaptation to a coastal environment.</title>
        <authorList>
            <person name="Palenik B."/>
            <person name="Ren Q."/>
            <person name="Dupont C.L."/>
            <person name="Myers G.S."/>
            <person name="Heidelberg J.F."/>
            <person name="Badger J.H."/>
            <person name="Madupu R."/>
            <person name="Nelson W.C."/>
            <person name="Brinkac L.M."/>
            <person name="Dodson R.J."/>
            <person name="Durkin A.S."/>
            <person name="Daugherty S.C."/>
            <person name="Sullivan S.A."/>
            <person name="Khouri H."/>
            <person name="Mohamoud Y."/>
            <person name="Halpin R."/>
            <person name="Paulsen I.T."/>
        </authorList>
    </citation>
    <scope>NUCLEOTIDE SEQUENCE [LARGE SCALE GENOMIC DNA]</scope>
    <source>
        <strain>CC9311</strain>
    </source>
</reference>